<evidence type="ECO:0000255" key="1">
    <source>
        <dbReference type="HAMAP-Rule" id="MF_01584"/>
    </source>
</evidence>
<dbReference type="EMBL" id="CP000647">
    <property type="protein sequence ID" value="ABR76511.1"/>
    <property type="molecule type" value="Genomic_DNA"/>
</dbReference>
<dbReference type="RefSeq" id="WP_004176583.1">
    <property type="nucleotide sequence ID" value="NC_009648.1"/>
</dbReference>
<dbReference type="SMR" id="A6T7E0"/>
<dbReference type="STRING" id="272620.KPN_01078"/>
<dbReference type="jPOST" id="A6T7E0"/>
<dbReference type="PaxDb" id="272620-KPN_01078"/>
<dbReference type="EnsemblBacteria" id="ABR76511">
    <property type="protein sequence ID" value="ABR76511"/>
    <property type="gene ID" value="KPN_01078"/>
</dbReference>
<dbReference type="KEGG" id="kpn:KPN_01078"/>
<dbReference type="HOGENOM" id="CLU_057831_2_0_6"/>
<dbReference type="Proteomes" id="UP000000265">
    <property type="component" value="Chromosome"/>
</dbReference>
<dbReference type="FunFam" id="1.10.10.10:FF:000196">
    <property type="entry name" value="UPF0502 protein YceH"/>
    <property type="match status" value="1"/>
</dbReference>
<dbReference type="Gene3D" id="1.10.10.10">
    <property type="entry name" value="Winged helix-like DNA-binding domain superfamily/Winged helix DNA-binding domain"/>
    <property type="match status" value="2"/>
</dbReference>
<dbReference type="HAMAP" id="MF_01584">
    <property type="entry name" value="UPF0502"/>
    <property type="match status" value="1"/>
</dbReference>
<dbReference type="InterPro" id="IPR007432">
    <property type="entry name" value="DUF480"/>
</dbReference>
<dbReference type="InterPro" id="IPR036388">
    <property type="entry name" value="WH-like_DNA-bd_sf"/>
</dbReference>
<dbReference type="InterPro" id="IPR036390">
    <property type="entry name" value="WH_DNA-bd_sf"/>
</dbReference>
<dbReference type="NCBIfam" id="NF008413">
    <property type="entry name" value="PRK11239.1"/>
    <property type="match status" value="1"/>
</dbReference>
<dbReference type="PANTHER" id="PTHR38768">
    <property type="entry name" value="UPF0502 PROTEIN YCEH"/>
    <property type="match status" value="1"/>
</dbReference>
<dbReference type="PANTHER" id="PTHR38768:SF1">
    <property type="entry name" value="UPF0502 PROTEIN YCEH"/>
    <property type="match status" value="1"/>
</dbReference>
<dbReference type="Pfam" id="PF04337">
    <property type="entry name" value="DUF480"/>
    <property type="match status" value="1"/>
</dbReference>
<dbReference type="SUPFAM" id="SSF46785">
    <property type="entry name" value="Winged helix' DNA-binding domain"/>
    <property type="match status" value="2"/>
</dbReference>
<accession>A6T7E0</accession>
<gene>
    <name type="ordered locus">KPN78578_10500</name>
    <name type="ORF">KPN_01078</name>
</gene>
<proteinExistence type="inferred from homology"/>
<sequence length="217" mass="24286">MKYQLTAHEARVIGCLLEKQVTTPEQYPLSVNAVVTACNQKTNREPVMSLSESEVQALLDTLVKRHYLRTVSGFGNRVTKYEQRFCNSEFGDLKLSAGEVAVVTTLLLRGAQTPGELRSRAQRMYEFSDMAEVESVLEGLATREDGPFVARLPREPGKRESRYMHLFCDDMDTLITTVEALAPLDDDGDLRARVEALEGEVAELKARLDSLLHHLGD</sequence>
<reference key="1">
    <citation type="submission" date="2006-09" db="EMBL/GenBank/DDBJ databases">
        <authorList>
            <consortium name="The Klebsiella pneumonia Genome Sequencing Project"/>
            <person name="McClelland M."/>
            <person name="Sanderson E.K."/>
            <person name="Spieth J."/>
            <person name="Clifton W.S."/>
            <person name="Latreille P."/>
            <person name="Sabo A."/>
            <person name="Pepin K."/>
            <person name="Bhonagiri V."/>
            <person name="Porwollik S."/>
            <person name="Ali J."/>
            <person name="Wilson R.K."/>
        </authorList>
    </citation>
    <scope>NUCLEOTIDE SEQUENCE [LARGE SCALE GENOMIC DNA]</scope>
    <source>
        <strain>ATCC 700721 / MGH 78578</strain>
    </source>
</reference>
<feature type="chain" id="PRO_1000069298" description="UPF0502 protein KPN78578_10500">
    <location>
        <begin position="1"/>
        <end position="217"/>
    </location>
</feature>
<comment type="similarity">
    <text evidence="1">Belongs to the UPF0502 family.</text>
</comment>
<name>Y1050_KLEP7</name>
<organism>
    <name type="scientific">Klebsiella pneumoniae subsp. pneumoniae (strain ATCC 700721 / MGH 78578)</name>
    <dbReference type="NCBI Taxonomy" id="272620"/>
    <lineage>
        <taxon>Bacteria</taxon>
        <taxon>Pseudomonadati</taxon>
        <taxon>Pseudomonadota</taxon>
        <taxon>Gammaproteobacteria</taxon>
        <taxon>Enterobacterales</taxon>
        <taxon>Enterobacteriaceae</taxon>
        <taxon>Klebsiella/Raoultella group</taxon>
        <taxon>Klebsiella</taxon>
        <taxon>Klebsiella pneumoniae complex</taxon>
    </lineage>
</organism>
<protein>
    <recommendedName>
        <fullName evidence="1">UPF0502 protein KPN78578_10500</fullName>
    </recommendedName>
</protein>